<proteinExistence type="inferred from homology"/>
<accession>A7TQN2</accession>
<reference key="1">
    <citation type="journal article" date="2007" name="Proc. Natl. Acad. Sci. U.S.A.">
        <title>Independent sorting-out of thousands of duplicated gene pairs in two yeast species descended from a whole-genome duplication.</title>
        <authorList>
            <person name="Scannell D.R."/>
            <person name="Frank A.C."/>
            <person name="Conant G.C."/>
            <person name="Byrne K.P."/>
            <person name="Woolfit M."/>
            <person name="Wolfe K.H."/>
        </authorList>
    </citation>
    <scope>NUCLEOTIDE SEQUENCE [LARGE SCALE GENOMIC DNA]</scope>
    <source>
        <strain>ATCC 22028 / DSM 70294 / BCRC 21397 / CBS 2163 / NBRC 10782 / NRRL Y-8283 / UCD 57-17</strain>
    </source>
</reference>
<name>SQS1_VANPO</name>
<sequence length="767" mass="88270">MAKRHKHFEGRGRGGSRGRGRGRGGSRGRGRGGSRSRGAGRGGFGRSSNDDNWRNSSIPFGDGDLGNFNFADIDVPRGRRVYYSPDDIEDYYFGKSENMESMKMGGLRPGHKREDTPRSSSFRARPVQFIKAKDVYDPSHDLIIKLRSKNLEQESQDEELSQGDAESAREDFESGTEEEIEEEEEVLPEIEREEVEEEEVEPEEVEEEEVEPEEVDSEDAESEEVDDKDLFFIDEEGYNEDTLPTVPSVSISEDSTVKKPQKTNLEFNDILTVGKVEINLAHDASDDGVFVSNVKKNYHPFSGYISQVMKNIQVSDEDDDEDDYEDEEEDFQSDFSYKYEQQTTSKAISADIEKLSISSENLKNSSDISRDNSPDNNEEQESKDPEFGFLEEDFVINTSEVSVTNIRIGFSENSYFLKCYRLFGHYESKWIDQETFLDLILNDLGLPEHRLNAYLTFIRDSLIPKEEPPEPTYSDIHFSDTSEEESDNDSEIGDDMREGIEDLISYATKLEKDRNFEFETKSLQTVGKGKKKKLLVQEDMQLDGVIASELQDKFSTRLDNKAKKRRTKEDFIDQENEKSDDLFKKYPYGLHVLNIKEEFELFIRRSDKEALVFPPLDPHGNKTITKFAKFYFMKTNKRGRGNQTHIFVQKVKATRYNEPNYNIIDNLTRQRPIFMRHDVSKPRNEYQRTERVKLPKGKFHVKEGEVVGQDAPVIDRNNIGRILLERLGWSEGEGLGIQGNKGISEPVFAVVKKSKTGLRHERKKRIE</sequence>
<keyword id="KW-0963">Cytoplasm</keyword>
<keyword id="KW-0507">mRNA processing</keyword>
<keyword id="KW-0508">mRNA splicing</keyword>
<keyword id="KW-0539">Nucleus</keyword>
<keyword id="KW-1185">Reference proteome</keyword>
<protein>
    <recommendedName>
        <fullName>Protein SQS1</fullName>
    </recommendedName>
</protein>
<evidence type="ECO:0000250" key="1"/>
<evidence type="ECO:0000255" key="2">
    <source>
        <dbReference type="PROSITE-ProRule" id="PRU00092"/>
    </source>
</evidence>
<evidence type="ECO:0000256" key="3">
    <source>
        <dbReference type="SAM" id="MobiDB-lite"/>
    </source>
</evidence>
<evidence type="ECO:0000305" key="4"/>
<feature type="chain" id="PRO_0000325001" description="Protein SQS1">
    <location>
        <begin position="1"/>
        <end position="767"/>
    </location>
</feature>
<feature type="domain" description="R3H">
    <location>
        <begin position="589"/>
        <end position="652"/>
    </location>
</feature>
<feature type="domain" description="G-patch" evidence="2">
    <location>
        <begin position="716"/>
        <end position="763"/>
    </location>
</feature>
<feature type="region of interest" description="Disordered" evidence="3">
    <location>
        <begin position="1"/>
        <end position="71"/>
    </location>
</feature>
<feature type="region of interest" description="Disordered" evidence="3">
    <location>
        <begin position="101"/>
        <end position="127"/>
    </location>
</feature>
<feature type="region of interest" description="Disordered" evidence="3">
    <location>
        <begin position="147"/>
        <end position="258"/>
    </location>
</feature>
<feature type="region of interest" description="Disordered" evidence="3">
    <location>
        <begin position="363"/>
        <end position="387"/>
    </location>
</feature>
<feature type="region of interest" description="Disordered" evidence="3">
    <location>
        <begin position="466"/>
        <end position="494"/>
    </location>
</feature>
<feature type="compositionally biased region" description="Basic residues" evidence="3">
    <location>
        <begin position="1"/>
        <end position="34"/>
    </location>
</feature>
<feature type="compositionally biased region" description="Gly residues" evidence="3">
    <location>
        <begin position="35"/>
        <end position="45"/>
    </location>
</feature>
<feature type="compositionally biased region" description="Acidic residues" evidence="3">
    <location>
        <begin position="173"/>
        <end position="239"/>
    </location>
</feature>
<feature type="compositionally biased region" description="Polar residues" evidence="3">
    <location>
        <begin position="245"/>
        <end position="254"/>
    </location>
</feature>
<feature type="compositionally biased region" description="Acidic residues" evidence="3">
    <location>
        <begin position="481"/>
        <end position="493"/>
    </location>
</feature>
<organism>
    <name type="scientific">Vanderwaltozyma polyspora (strain ATCC 22028 / DSM 70294 / BCRC 21397 / CBS 2163 / NBRC 10782 / NRRL Y-8283 / UCD 57-17)</name>
    <name type="common">Kluyveromyces polysporus</name>
    <dbReference type="NCBI Taxonomy" id="436907"/>
    <lineage>
        <taxon>Eukaryota</taxon>
        <taxon>Fungi</taxon>
        <taxon>Dikarya</taxon>
        <taxon>Ascomycota</taxon>
        <taxon>Saccharomycotina</taxon>
        <taxon>Saccharomycetes</taxon>
        <taxon>Saccharomycetales</taxon>
        <taxon>Saccharomycetaceae</taxon>
        <taxon>Vanderwaltozyma</taxon>
    </lineage>
</organism>
<dbReference type="EMBL" id="DS480461">
    <property type="protein sequence ID" value="EDO15413.1"/>
    <property type="molecule type" value="Genomic_DNA"/>
</dbReference>
<dbReference type="RefSeq" id="XP_001643271.1">
    <property type="nucleotide sequence ID" value="XM_001643221.1"/>
</dbReference>
<dbReference type="SMR" id="A7TQN2"/>
<dbReference type="FunCoup" id="A7TQN2">
    <property type="interactions" value="309"/>
</dbReference>
<dbReference type="STRING" id="436907.A7TQN2"/>
<dbReference type="GeneID" id="5543501"/>
<dbReference type="KEGG" id="vpo:Kpol_1015p2"/>
<dbReference type="eggNOG" id="KOG0154">
    <property type="taxonomic scope" value="Eukaryota"/>
</dbReference>
<dbReference type="HOGENOM" id="CLU_021974_1_0_1"/>
<dbReference type="InParanoid" id="A7TQN2"/>
<dbReference type="OMA" id="PVFMRID"/>
<dbReference type="OrthoDB" id="21470at2759"/>
<dbReference type="PhylomeDB" id="A7TQN2"/>
<dbReference type="Proteomes" id="UP000000267">
    <property type="component" value="Unassembled WGS sequence"/>
</dbReference>
<dbReference type="GO" id="GO:0030686">
    <property type="term" value="C:90S preribosome"/>
    <property type="evidence" value="ECO:0007669"/>
    <property type="project" value="EnsemblFungi"/>
</dbReference>
<dbReference type="GO" id="GO:0005737">
    <property type="term" value="C:cytoplasm"/>
    <property type="evidence" value="ECO:0007669"/>
    <property type="project" value="UniProtKB-SubCell"/>
</dbReference>
<dbReference type="GO" id="GO:0005634">
    <property type="term" value="C:nucleus"/>
    <property type="evidence" value="ECO:0007669"/>
    <property type="project" value="UniProtKB-SubCell"/>
</dbReference>
<dbReference type="GO" id="GO:0030687">
    <property type="term" value="C:preribosome, large subunit precursor"/>
    <property type="evidence" value="ECO:0007669"/>
    <property type="project" value="EnsemblFungi"/>
</dbReference>
<dbReference type="GO" id="GO:0030688">
    <property type="term" value="C:preribosome, small subunit precursor"/>
    <property type="evidence" value="ECO:0007669"/>
    <property type="project" value="EnsemblFungi"/>
</dbReference>
<dbReference type="GO" id="GO:0008047">
    <property type="term" value="F:enzyme activator activity"/>
    <property type="evidence" value="ECO:0007669"/>
    <property type="project" value="EnsemblFungi"/>
</dbReference>
<dbReference type="GO" id="GO:0003676">
    <property type="term" value="F:nucleic acid binding"/>
    <property type="evidence" value="ECO:0007669"/>
    <property type="project" value="InterPro"/>
</dbReference>
<dbReference type="GO" id="GO:0030490">
    <property type="term" value="P:maturation of SSU-rRNA"/>
    <property type="evidence" value="ECO:0007669"/>
    <property type="project" value="EnsemblFungi"/>
</dbReference>
<dbReference type="GO" id="GO:0000398">
    <property type="term" value="P:mRNA splicing, via spliceosome"/>
    <property type="evidence" value="ECO:0007669"/>
    <property type="project" value="EnsemblFungi"/>
</dbReference>
<dbReference type="CDD" id="cd02646">
    <property type="entry name" value="R3H_G-patch"/>
    <property type="match status" value="1"/>
</dbReference>
<dbReference type="Gene3D" id="3.30.1370.50">
    <property type="entry name" value="R3H-like domain"/>
    <property type="match status" value="1"/>
</dbReference>
<dbReference type="InterPro" id="IPR000467">
    <property type="entry name" value="G_patch_dom"/>
</dbReference>
<dbReference type="InterPro" id="IPR036867">
    <property type="entry name" value="R3H_dom_sf"/>
</dbReference>
<dbReference type="InterPro" id="IPR034082">
    <property type="entry name" value="R3H_G-patch"/>
</dbReference>
<dbReference type="InterPro" id="IPR051189">
    <property type="entry name" value="Splicing_assoc_domain"/>
</dbReference>
<dbReference type="PANTHER" id="PTHR14195">
    <property type="entry name" value="G PATCH DOMAIN CONTAINING PROTEIN 2"/>
    <property type="match status" value="1"/>
</dbReference>
<dbReference type="Pfam" id="PF01585">
    <property type="entry name" value="G-patch"/>
    <property type="match status" value="1"/>
</dbReference>
<dbReference type="SMART" id="SM00443">
    <property type="entry name" value="G_patch"/>
    <property type="match status" value="1"/>
</dbReference>
<dbReference type="SUPFAM" id="SSF82708">
    <property type="entry name" value="R3H domain"/>
    <property type="match status" value="1"/>
</dbReference>
<dbReference type="PROSITE" id="PS50174">
    <property type="entry name" value="G_PATCH"/>
    <property type="match status" value="1"/>
</dbReference>
<gene>
    <name type="primary">SQS1</name>
    <name type="ORF">Kpol_1015p2</name>
</gene>
<comment type="function">
    <text evidence="1">May be involved in splicing.</text>
</comment>
<comment type="subcellular location">
    <subcellularLocation>
        <location evidence="1">Cytoplasm</location>
    </subcellularLocation>
    <subcellularLocation>
        <location evidence="1">Nucleus</location>
    </subcellularLocation>
</comment>
<comment type="similarity">
    <text evidence="4">Belongs to the SQS1 family.</text>
</comment>